<gene>
    <name type="primary">xylA</name>
    <name type="ordered locus">Tthe_2492</name>
</gene>
<accession>P29441</accession>
<accession>D9TTQ8</accession>
<name>XYLA_THETC</name>
<organism>
    <name type="scientific">Thermoanaerobacterium thermosaccharolyticum (strain ATCC 7956 / DSM 571 / NCIMB 9385 / NCA 3814 / NCTC 13789 / WDCM 00135 / 2032)</name>
    <name type="common">Clostridium thermosaccharolyticum</name>
    <dbReference type="NCBI Taxonomy" id="580327"/>
    <lineage>
        <taxon>Bacteria</taxon>
        <taxon>Bacillati</taxon>
        <taxon>Bacillota</taxon>
        <taxon>Clostridia</taxon>
        <taxon>Thermoanaerobacterales</taxon>
        <taxon>Thermoanaerobacteraceae</taxon>
        <taxon>Thermoanaerobacterium</taxon>
    </lineage>
</organism>
<keyword id="KW-0119">Carbohydrate metabolism</keyword>
<keyword id="KW-0963">Cytoplasm</keyword>
<keyword id="KW-0413">Isomerase</keyword>
<keyword id="KW-0460">Magnesium</keyword>
<keyword id="KW-0479">Metal-binding</keyword>
<keyword id="KW-1185">Reference proteome</keyword>
<keyword id="KW-0859">Xylose metabolism</keyword>
<evidence type="ECO:0000250" key="1"/>
<evidence type="ECO:0000305" key="2"/>
<protein>
    <recommendedName>
        <fullName>Xylose isomerase</fullName>
        <ecNumber>5.3.1.5</ecNumber>
    </recommendedName>
</protein>
<reference key="1">
    <citation type="journal article" date="1994" name="Gene">
        <title>The xylose isomerase-encoding gene (xylA) of Clostridium thermosaccharolyticum: cloning, sequencing and phylogeny of XylA enzymes.</title>
        <authorList>
            <person name="Meaden P.G."/>
            <person name="Aduse-Opoku J."/>
            <person name="Reizer J."/>
            <person name="Reizer A."/>
            <person name="Lanceman Y.A."/>
            <person name="Martin M.F."/>
            <person name="Mitchell W.J."/>
        </authorList>
    </citation>
    <scope>NUCLEOTIDE SEQUENCE [GENOMIC DNA]</scope>
    <source>
        <strain>ATCC 7956 / DSM 571 / NCIMB 9385 / NCA 3814 / NCTC 13789 / WDCM 00135 / 2032</strain>
    </source>
</reference>
<reference key="2">
    <citation type="submission" date="2010-08" db="EMBL/GenBank/DDBJ databases">
        <title>Complete sequence of Thermoanaerobacterium thermosaccharolyticum DSM 571.</title>
        <authorList>
            <consortium name="US DOE Joint Genome Institute"/>
            <person name="Lucas S."/>
            <person name="Copeland A."/>
            <person name="Lapidus A."/>
            <person name="Cheng J.-F."/>
            <person name="Bruce D."/>
            <person name="Goodwin L."/>
            <person name="Pitluck S."/>
            <person name="Teshima H."/>
            <person name="Detter J.C."/>
            <person name="Han C."/>
            <person name="Tapia R."/>
            <person name="Land M."/>
            <person name="Hauser L."/>
            <person name="Chang Y.-J."/>
            <person name="Jeffries C."/>
            <person name="Kyrpides N."/>
            <person name="Ivanova N."/>
            <person name="Mikhailova N."/>
            <person name="Hemme C.L."/>
            <person name="Woyke T."/>
        </authorList>
    </citation>
    <scope>NUCLEOTIDE SEQUENCE [LARGE SCALE GENOMIC DNA]</scope>
    <source>
        <strain>ATCC 7956 / DSM 571 / NCIMB 9385 / NCA 3814 / NCTC 13789 / WDCM 00135 / 2032</strain>
    </source>
</reference>
<feature type="chain" id="PRO_0000195773" description="Xylose isomerase">
    <location>
        <begin position="1"/>
        <end position="439"/>
    </location>
</feature>
<feature type="active site" evidence="1">
    <location>
        <position position="101"/>
    </location>
</feature>
<feature type="active site" evidence="1">
    <location>
        <position position="104"/>
    </location>
</feature>
<feature type="binding site" evidence="1">
    <location>
        <position position="232"/>
    </location>
    <ligand>
        <name>Mg(2+)</name>
        <dbReference type="ChEBI" id="CHEBI:18420"/>
        <label>1</label>
    </ligand>
</feature>
<feature type="binding site" evidence="1">
    <location>
        <position position="268"/>
    </location>
    <ligand>
        <name>Mg(2+)</name>
        <dbReference type="ChEBI" id="CHEBI:18420"/>
        <label>1</label>
    </ligand>
</feature>
<feature type="binding site" evidence="1">
    <location>
        <position position="268"/>
    </location>
    <ligand>
        <name>Mg(2+)</name>
        <dbReference type="ChEBI" id="CHEBI:18420"/>
        <label>2</label>
    </ligand>
</feature>
<feature type="binding site" evidence="1">
    <location>
        <position position="271"/>
    </location>
    <ligand>
        <name>Mg(2+)</name>
        <dbReference type="ChEBI" id="CHEBI:18420"/>
        <label>2</label>
    </ligand>
</feature>
<feature type="binding site" evidence="1">
    <location>
        <position position="296"/>
    </location>
    <ligand>
        <name>Mg(2+)</name>
        <dbReference type="ChEBI" id="CHEBI:18420"/>
        <label>1</label>
    </ligand>
</feature>
<feature type="binding site" evidence="1">
    <location>
        <position position="307"/>
    </location>
    <ligand>
        <name>Mg(2+)</name>
        <dbReference type="ChEBI" id="CHEBI:18420"/>
        <label>2</label>
    </ligand>
</feature>
<feature type="binding site" evidence="1">
    <location>
        <position position="309"/>
    </location>
    <ligand>
        <name>Mg(2+)</name>
        <dbReference type="ChEBI" id="CHEBI:18420"/>
        <label>2</label>
    </ligand>
</feature>
<feature type="binding site" evidence="1">
    <location>
        <position position="339"/>
    </location>
    <ligand>
        <name>Mg(2+)</name>
        <dbReference type="ChEBI" id="CHEBI:18420"/>
        <label>1</label>
    </ligand>
</feature>
<feature type="sequence conflict" description="In Ref. 1; AAA79035." evidence="2" ref="1">
    <original>F</original>
    <variation>L</variation>
    <location>
        <position position="263"/>
    </location>
</feature>
<feature type="sequence conflict" description="In Ref. 1; AAA79035." evidence="2" ref="1">
    <original>GV</original>
    <variation>AE</variation>
    <location>
        <begin position="377"/>
        <end position="378"/>
    </location>
</feature>
<feature type="sequence conflict" description="In Ref. 1; AAA79035." evidence="2" ref="1">
    <original>NKSGRQEMLESILN</original>
    <variation>TNQVDKKCLNQYSI</variation>
    <location>
        <begin position="420"/>
        <end position="433"/>
    </location>
</feature>
<proteinExistence type="inferred from homology"/>
<dbReference type="EC" id="5.3.1.5"/>
<dbReference type="EMBL" id="M91248">
    <property type="protein sequence ID" value="AAA79035.1"/>
    <property type="molecule type" value="Genomic_DNA"/>
</dbReference>
<dbReference type="EMBL" id="CP002171">
    <property type="protein sequence ID" value="ADL69948.1"/>
    <property type="molecule type" value="Genomic_DNA"/>
</dbReference>
<dbReference type="PIR" id="I40806">
    <property type="entry name" value="I40806"/>
</dbReference>
<dbReference type="RefSeq" id="WP_013298905.1">
    <property type="nucleotide sequence ID" value="NC_014410.1"/>
</dbReference>
<dbReference type="SMR" id="P29441"/>
<dbReference type="STRING" id="580327.Tthe_2492"/>
<dbReference type="GeneID" id="93865290"/>
<dbReference type="KEGG" id="ttm:Tthe_2492"/>
<dbReference type="eggNOG" id="COG2115">
    <property type="taxonomic scope" value="Bacteria"/>
</dbReference>
<dbReference type="HOGENOM" id="CLU_037261_1_0_9"/>
<dbReference type="OrthoDB" id="9763981at2"/>
<dbReference type="Proteomes" id="UP000001626">
    <property type="component" value="Chromosome"/>
</dbReference>
<dbReference type="GO" id="GO:0005737">
    <property type="term" value="C:cytoplasm"/>
    <property type="evidence" value="ECO:0007669"/>
    <property type="project" value="UniProtKB-SubCell"/>
</dbReference>
<dbReference type="GO" id="GO:0000287">
    <property type="term" value="F:magnesium ion binding"/>
    <property type="evidence" value="ECO:0007669"/>
    <property type="project" value="UniProtKB-UniRule"/>
</dbReference>
<dbReference type="GO" id="GO:0009045">
    <property type="term" value="F:xylose isomerase activity"/>
    <property type="evidence" value="ECO:0007669"/>
    <property type="project" value="UniProtKB-UniRule"/>
</dbReference>
<dbReference type="GO" id="GO:0042732">
    <property type="term" value="P:D-xylose metabolic process"/>
    <property type="evidence" value="ECO:0007669"/>
    <property type="project" value="UniProtKB-UniRule"/>
</dbReference>
<dbReference type="FunFam" id="3.20.20.150:FF:000002">
    <property type="entry name" value="Xylose isomerase"/>
    <property type="match status" value="1"/>
</dbReference>
<dbReference type="Gene3D" id="3.20.20.150">
    <property type="entry name" value="Divalent-metal-dependent TIM barrel enzymes"/>
    <property type="match status" value="1"/>
</dbReference>
<dbReference type="HAMAP" id="MF_00455">
    <property type="entry name" value="Xylose_isom_A"/>
    <property type="match status" value="1"/>
</dbReference>
<dbReference type="InterPro" id="IPR036237">
    <property type="entry name" value="Xyl_isomerase-like_sf"/>
</dbReference>
<dbReference type="InterPro" id="IPR013022">
    <property type="entry name" value="Xyl_isomerase-like_TIM-brl"/>
</dbReference>
<dbReference type="InterPro" id="IPR013452">
    <property type="entry name" value="Xylose_isom_bac"/>
</dbReference>
<dbReference type="InterPro" id="IPR001998">
    <property type="entry name" value="Xylose_isomerase"/>
</dbReference>
<dbReference type="NCBIfam" id="NF003998">
    <property type="entry name" value="PRK05474.1"/>
    <property type="match status" value="1"/>
</dbReference>
<dbReference type="NCBIfam" id="TIGR02630">
    <property type="entry name" value="xylose_isom_A"/>
    <property type="match status" value="1"/>
</dbReference>
<dbReference type="PANTHER" id="PTHR48408">
    <property type="match status" value="1"/>
</dbReference>
<dbReference type="PANTHER" id="PTHR48408:SF1">
    <property type="entry name" value="XYLOSE ISOMERASE"/>
    <property type="match status" value="1"/>
</dbReference>
<dbReference type="Pfam" id="PF01261">
    <property type="entry name" value="AP_endonuc_2"/>
    <property type="match status" value="1"/>
</dbReference>
<dbReference type="PRINTS" id="PR00688">
    <property type="entry name" value="XYLOSISMRASE"/>
</dbReference>
<dbReference type="SUPFAM" id="SSF51658">
    <property type="entry name" value="Xylose isomerase-like"/>
    <property type="match status" value="1"/>
</dbReference>
<dbReference type="PROSITE" id="PS51415">
    <property type="entry name" value="XYLOSE_ISOMERASE"/>
    <property type="match status" value="1"/>
</dbReference>
<sequence>MSKYFEKVSKIKYEGPKSNNPYAFKFYNPEEVIDGKTMEEHLRFSIAYWHTFTADGTDQFGKATMQRPWNHLTDPMDIAKARVEAAFEFFDKINAPFFCFHDRDIAPEGDTLRETNKNLDIIVAMIKDYLKTSKTKVLWGTANLFSNPRFVHGASTSCNADVFAYSAAQVKKALEITKELGGQNYVFWGGREGYETLLNTDMELELDNFARFLHMAVDYAKEIGFEGQFLIEPKPKEPTKHQYDFDVANVLAFLRKYDLDKYFKVNIEANHATLAAHDFQHELRYARINGVLGSIDANTGDMLLGWDTDQFPTDIRMTTLAMYEVIKMGGFDKGGLNFDAKVRRASFEPEDLFLGHIAGMDAFAKGFKVAYKLVKDGVFDKFIEERYASYKDGIGADIVSGKADFKSLEKYALEHSEIVNKSGRQEMLESILNQYLFTE</sequence>
<comment type="catalytic activity">
    <reaction>
        <text>alpha-D-xylose = alpha-D-xylulofuranose</text>
        <dbReference type="Rhea" id="RHEA:22816"/>
        <dbReference type="ChEBI" id="CHEBI:28518"/>
        <dbReference type="ChEBI" id="CHEBI:188998"/>
        <dbReference type="EC" id="5.3.1.5"/>
    </reaction>
</comment>
<comment type="cofactor">
    <cofactor evidence="1">
        <name>Mg(2+)</name>
        <dbReference type="ChEBI" id="CHEBI:18420"/>
    </cofactor>
    <text evidence="1">Binds 2 magnesium ions per subunit.</text>
</comment>
<comment type="subunit">
    <text>Homotetramer.</text>
</comment>
<comment type="subcellular location">
    <subcellularLocation>
        <location>Cytoplasm</location>
    </subcellularLocation>
</comment>
<comment type="similarity">
    <text evidence="2">Belongs to the xylose isomerase family.</text>
</comment>